<keyword id="KW-0067">ATP-binding</keyword>
<keyword id="KW-0963">Cytoplasm</keyword>
<keyword id="KW-0227">DNA damage</keyword>
<keyword id="KW-0233">DNA recombination</keyword>
<keyword id="KW-0234">DNA repair</keyword>
<keyword id="KW-0238">DNA-binding</keyword>
<keyword id="KW-0378">Hydrolase</keyword>
<keyword id="KW-0547">Nucleotide-binding</keyword>
<comment type="function">
    <text evidence="1">The RuvA-RuvB-RuvC complex processes Holliday junction (HJ) DNA during genetic recombination and DNA repair, while the RuvA-RuvB complex plays an important role in the rescue of blocked DNA replication forks via replication fork reversal (RFR). RuvA specifically binds to HJ cruciform DNA, conferring on it an open structure. The RuvB hexamer acts as an ATP-dependent pump, pulling dsDNA into and through the RuvAB complex. RuvB forms 2 homohexamers on either side of HJ DNA bound by 1 or 2 RuvA tetramers; 4 subunits per hexamer contact DNA at a time. Coordinated motions by a converter formed by DNA-disengaged RuvB subunits stimulates ATP hydrolysis and nucleotide exchange. Immobilization of the converter enables RuvB to convert the ATP-contained energy into a lever motion, pulling 2 nucleotides of DNA out of the RuvA tetramer per ATP hydrolyzed, thus driving DNA branch migration. The RuvB motors rotate together with the DNA substrate, which together with the progressing nucleotide cycle form the mechanistic basis for DNA recombination by continuous HJ branch migration. Branch migration allows RuvC to scan DNA until it finds its consensus sequence, where it cleaves and resolves cruciform DNA.</text>
</comment>
<comment type="catalytic activity">
    <reaction evidence="1">
        <text>ATP + H2O = ADP + phosphate + H(+)</text>
        <dbReference type="Rhea" id="RHEA:13065"/>
        <dbReference type="ChEBI" id="CHEBI:15377"/>
        <dbReference type="ChEBI" id="CHEBI:15378"/>
        <dbReference type="ChEBI" id="CHEBI:30616"/>
        <dbReference type="ChEBI" id="CHEBI:43474"/>
        <dbReference type="ChEBI" id="CHEBI:456216"/>
    </reaction>
</comment>
<comment type="subunit">
    <text evidence="1">Homohexamer. Forms an RuvA(8)-RuvB(12)-Holliday junction (HJ) complex. HJ DNA is sandwiched between 2 RuvA tetramers; dsDNA enters through RuvA and exits via RuvB. An RuvB hexamer assembles on each DNA strand where it exits the tetramer. Each RuvB hexamer is contacted by two RuvA subunits (via domain III) on 2 adjacent RuvB subunits; this complex drives branch migration. In the full resolvosome a probable DNA-RuvA(4)-RuvB(12)-RuvC(2) complex forms which resolves the HJ.</text>
</comment>
<comment type="subcellular location">
    <subcellularLocation>
        <location evidence="1">Cytoplasm</location>
    </subcellularLocation>
</comment>
<comment type="domain">
    <text evidence="1">Has 3 domains, the large (RuvB-L) and small ATPase (RuvB-S) domains and the C-terminal head (RuvB-H) domain. The head domain binds DNA, while the ATPase domains jointly bind ATP, ADP or are empty depending on the state of the subunit in the translocation cycle. During a single DNA translocation step the structure of each domain remains the same, but their relative positions change.</text>
</comment>
<comment type="similarity">
    <text evidence="1">Belongs to the RuvB family.</text>
</comment>
<accession>Q65UP0</accession>
<feature type="chain" id="PRO_0000165554" description="Holliday junction branch migration complex subunit RuvB">
    <location>
        <begin position="1"/>
        <end position="335"/>
    </location>
</feature>
<feature type="region of interest" description="Large ATPase domain (RuvB-L)" evidence="1">
    <location>
        <begin position="4"/>
        <end position="184"/>
    </location>
</feature>
<feature type="region of interest" description="Small ATPAse domain (RuvB-S)" evidence="1">
    <location>
        <begin position="185"/>
        <end position="255"/>
    </location>
</feature>
<feature type="region of interest" description="Head domain (RuvB-H)" evidence="1">
    <location>
        <begin position="258"/>
        <end position="335"/>
    </location>
</feature>
<feature type="binding site" evidence="1">
    <location>
        <position position="23"/>
    </location>
    <ligand>
        <name>ATP</name>
        <dbReference type="ChEBI" id="CHEBI:30616"/>
    </ligand>
</feature>
<feature type="binding site" evidence="1">
    <location>
        <position position="24"/>
    </location>
    <ligand>
        <name>ATP</name>
        <dbReference type="ChEBI" id="CHEBI:30616"/>
    </ligand>
</feature>
<feature type="binding site" evidence="1">
    <location>
        <position position="65"/>
    </location>
    <ligand>
        <name>ATP</name>
        <dbReference type="ChEBI" id="CHEBI:30616"/>
    </ligand>
</feature>
<feature type="binding site" evidence="1">
    <location>
        <position position="68"/>
    </location>
    <ligand>
        <name>ATP</name>
        <dbReference type="ChEBI" id="CHEBI:30616"/>
    </ligand>
</feature>
<feature type="binding site" evidence="1">
    <location>
        <position position="69"/>
    </location>
    <ligand>
        <name>ATP</name>
        <dbReference type="ChEBI" id="CHEBI:30616"/>
    </ligand>
</feature>
<feature type="binding site" evidence="1">
    <location>
        <position position="69"/>
    </location>
    <ligand>
        <name>Mg(2+)</name>
        <dbReference type="ChEBI" id="CHEBI:18420"/>
    </ligand>
</feature>
<feature type="binding site" evidence="1">
    <location>
        <position position="70"/>
    </location>
    <ligand>
        <name>ATP</name>
        <dbReference type="ChEBI" id="CHEBI:30616"/>
    </ligand>
</feature>
<feature type="binding site" evidence="1">
    <location>
        <begin position="131"/>
        <end position="133"/>
    </location>
    <ligand>
        <name>ATP</name>
        <dbReference type="ChEBI" id="CHEBI:30616"/>
    </ligand>
</feature>
<feature type="binding site" evidence="1">
    <location>
        <position position="174"/>
    </location>
    <ligand>
        <name>ATP</name>
        <dbReference type="ChEBI" id="CHEBI:30616"/>
    </ligand>
</feature>
<feature type="binding site" evidence="1">
    <location>
        <position position="184"/>
    </location>
    <ligand>
        <name>ATP</name>
        <dbReference type="ChEBI" id="CHEBI:30616"/>
    </ligand>
</feature>
<feature type="binding site" evidence="1">
    <location>
        <position position="221"/>
    </location>
    <ligand>
        <name>ATP</name>
        <dbReference type="ChEBI" id="CHEBI:30616"/>
    </ligand>
</feature>
<feature type="binding site" evidence="1">
    <location>
        <position position="294"/>
    </location>
    <ligand>
        <name>DNA</name>
        <dbReference type="ChEBI" id="CHEBI:16991"/>
    </ligand>
</feature>
<feature type="binding site" evidence="1">
    <location>
        <position position="313"/>
    </location>
    <ligand>
        <name>DNA</name>
        <dbReference type="ChEBI" id="CHEBI:16991"/>
    </ligand>
</feature>
<feature type="binding site" evidence="1">
    <location>
        <position position="318"/>
    </location>
    <ligand>
        <name>DNA</name>
        <dbReference type="ChEBI" id="CHEBI:16991"/>
    </ligand>
</feature>
<name>RUVB_MANSM</name>
<sequence length="335" mass="36982">MIEADRIISSNAQLGDEYIDRAIRPKLLTDYVGQPQVREQMGIFIQAAKLRQDALDHLLIFGPPGLGKTTLANIVANEMGVNIRTTSGPVLEKAGDLAAMLTNLEPHDVLFIDEIHRLSPAIEEVLYPAMEDYQLDIMIGEGPAARSIKLDLPPFTLIGATTRAGSLTSPLRDRFGIVQRLEFYSVEDLTSIVARSAGCLNLEMSDGASHEIARRSRGTPRIANRLLRRVRDFADVKNAGIISEDIAKSALSMLDIDQAGFDYLDRKLLSAVIERFDGGPVGLDNLAAAIGEERDTIEDVLEPYLIQQGFLQRTPRGRIATSRTYRHFGLDKLTE</sequence>
<reference key="1">
    <citation type="journal article" date="2004" name="Nat. Biotechnol.">
        <title>The genome sequence of the capnophilic rumen bacterium Mannheimia succiniciproducens.</title>
        <authorList>
            <person name="Hong S.H."/>
            <person name="Kim J.S."/>
            <person name="Lee S.Y."/>
            <person name="In Y.H."/>
            <person name="Choi S.S."/>
            <person name="Rih J.-K."/>
            <person name="Kim C.H."/>
            <person name="Jeong H."/>
            <person name="Hur C.G."/>
            <person name="Kim J.J."/>
        </authorList>
    </citation>
    <scope>NUCLEOTIDE SEQUENCE [LARGE SCALE GENOMIC DNA]</scope>
    <source>
        <strain>KCTC 0769BP / MBEL55E</strain>
    </source>
</reference>
<gene>
    <name evidence="1" type="primary">ruvB</name>
    <name type="ordered locus">MS0713</name>
</gene>
<evidence type="ECO:0000255" key="1">
    <source>
        <dbReference type="HAMAP-Rule" id="MF_00016"/>
    </source>
</evidence>
<dbReference type="EC" id="3.6.4.-" evidence="1"/>
<dbReference type="EMBL" id="AE016827">
    <property type="protein sequence ID" value="AAU37320.1"/>
    <property type="molecule type" value="Genomic_DNA"/>
</dbReference>
<dbReference type="RefSeq" id="WP_011199892.1">
    <property type="nucleotide sequence ID" value="NC_006300.1"/>
</dbReference>
<dbReference type="SMR" id="Q65UP0"/>
<dbReference type="STRING" id="221988.MS0713"/>
<dbReference type="KEGG" id="msu:MS0713"/>
<dbReference type="eggNOG" id="COG2255">
    <property type="taxonomic scope" value="Bacteria"/>
</dbReference>
<dbReference type="HOGENOM" id="CLU_055599_1_0_6"/>
<dbReference type="OrthoDB" id="9804478at2"/>
<dbReference type="Proteomes" id="UP000000607">
    <property type="component" value="Chromosome"/>
</dbReference>
<dbReference type="GO" id="GO:0005737">
    <property type="term" value="C:cytoplasm"/>
    <property type="evidence" value="ECO:0007669"/>
    <property type="project" value="UniProtKB-SubCell"/>
</dbReference>
<dbReference type="GO" id="GO:0048476">
    <property type="term" value="C:Holliday junction resolvase complex"/>
    <property type="evidence" value="ECO:0007669"/>
    <property type="project" value="UniProtKB-UniRule"/>
</dbReference>
<dbReference type="GO" id="GO:0005524">
    <property type="term" value="F:ATP binding"/>
    <property type="evidence" value="ECO:0007669"/>
    <property type="project" value="UniProtKB-UniRule"/>
</dbReference>
<dbReference type="GO" id="GO:0016887">
    <property type="term" value="F:ATP hydrolysis activity"/>
    <property type="evidence" value="ECO:0007669"/>
    <property type="project" value="InterPro"/>
</dbReference>
<dbReference type="GO" id="GO:0000400">
    <property type="term" value="F:four-way junction DNA binding"/>
    <property type="evidence" value="ECO:0007669"/>
    <property type="project" value="UniProtKB-UniRule"/>
</dbReference>
<dbReference type="GO" id="GO:0009378">
    <property type="term" value="F:four-way junction helicase activity"/>
    <property type="evidence" value="ECO:0007669"/>
    <property type="project" value="InterPro"/>
</dbReference>
<dbReference type="GO" id="GO:0006310">
    <property type="term" value="P:DNA recombination"/>
    <property type="evidence" value="ECO:0007669"/>
    <property type="project" value="UniProtKB-UniRule"/>
</dbReference>
<dbReference type="GO" id="GO:0006281">
    <property type="term" value="P:DNA repair"/>
    <property type="evidence" value="ECO:0007669"/>
    <property type="project" value="UniProtKB-UniRule"/>
</dbReference>
<dbReference type="CDD" id="cd00009">
    <property type="entry name" value="AAA"/>
    <property type="match status" value="1"/>
</dbReference>
<dbReference type="FunFam" id="1.10.10.10:FF:000086">
    <property type="entry name" value="Holliday junction ATP-dependent DNA helicase RuvB"/>
    <property type="match status" value="1"/>
</dbReference>
<dbReference type="FunFam" id="1.10.8.60:FF:000023">
    <property type="entry name" value="Holliday junction ATP-dependent DNA helicase RuvB"/>
    <property type="match status" value="1"/>
</dbReference>
<dbReference type="FunFam" id="3.40.50.300:FF:000073">
    <property type="entry name" value="Holliday junction ATP-dependent DNA helicase RuvB"/>
    <property type="match status" value="1"/>
</dbReference>
<dbReference type="Gene3D" id="1.10.8.60">
    <property type="match status" value="1"/>
</dbReference>
<dbReference type="Gene3D" id="3.40.50.300">
    <property type="entry name" value="P-loop containing nucleotide triphosphate hydrolases"/>
    <property type="match status" value="1"/>
</dbReference>
<dbReference type="Gene3D" id="1.10.10.10">
    <property type="entry name" value="Winged helix-like DNA-binding domain superfamily/Winged helix DNA-binding domain"/>
    <property type="match status" value="1"/>
</dbReference>
<dbReference type="HAMAP" id="MF_00016">
    <property type="entry name" value="DNA_HJ_migration_RuvB"/>
    <property type="match status" value="1"/>
</dbReference>
<dbReference type="InterPro" id="IPR003593">
    <property type="entry name" value="AAA+_ATPase"/>
</dbReference>
<dbReference type="InterPro" id="IPR041445">
    <property type="entry name" value="AAA_lid_4"/>
</dbReference>
<dbReference type="InterPro" id="IPR004605">
    <property type="entry name" value="DNA_helicase_Holl-junc_RuvB"/>
</dbReference>
<dbReference type="InterPro" id="IPR027417">
    <property type="entry name" value="P-loop_NTPase"/>
</dbReference>
<dbReference type="InterPro" id="IPR008824">
    <property type="entry name" value="RuvB-like_N"/>
</dbReference>
<dbReference type="InterPro" id="IPR008823">
    <property type="entry name" value="RuvB_C"/>
</dbReference>
<dbReference type="InterPro" id="IPR036388">
    <property type="entry name" value="WH-like_DNA-bd_sf"/>
</dbReference>
<dbReference type="InterPro" id="IPR036390">
    <property type="entry name" value="WH_DNA-bd_sf"/>
</dbReference>
<dbReference type="NCBIfam" id="NF000868">
    <property type="entry name" value="PRK00080.1"/>
    <property type="match status" value="1"/>
</dbReference>
<dbReference type="NCBIfam" id="TIGR00635">
    <property type="entry name" value="ruvB"/>
    <property type="match status" value="1"/>
</dbReference>
<dbReference type="PANTHER" id="PTHR42848">
    <property type="match status" value="1"/>
</dbReference>
<dbReference type="PANTHER" id="PTHR42848:SF1">
    <property type="entry name" value="HOLLIDAY JUNCTION BRANCH MIGRATION COMPLEX SUBUNIT RUVB"/>
    <property type="match status" value="1"/>
</dbReference>
<dbReference type="Pfam" id="PF17864">
    <property type="entry name" value="AAA_lid_4"/>
    <property type="match status" value="1"/>
</dbReference>
<dbReference type="Pfam" id="PF05491">
    <property type="entry name" value="RuvB_C"/>
    <property type="match status" value="1"/>
</dbReference>
<dbReference type="Pfam" id="PF05496">
    <property type="entry name" value="RuvB_N"/>
    <property type="match status" value="1"/>
</dbReference>
<dbReference type="SMART" id="SM00382">
    <property type="entry name" value="AAA"/>
    <property type="match status" value="1"/>
</dbReference>
<dbReference type="SUPFAM" id="SSF52540">
    <property type="entry name" value="P-loop containing nucleoside triphosphate hydrolases"/>
    <property type="match status" value="1"/>
</dbReference>
<dbReference type="SUPFAM" id="SSF46785">
    <property type="entry name" value="Winged helix' DNA-binding domain"/>
    <property type="match status" value="1"/>
</dbReference>
<organism>
    <name type="scientific">Mannheimia succiniciproducens (strain KCTC 0769BP / MBEL55E)</name>
    <dbReference type="NCBI Taxonomy" id="221988"/>
    <lineage>
        <taxon>Bacteria</taxon>
        <taxon>Pseudomonadati</taxon>
        <taxon>Pseudomonadota</taxon>
        <taxon>Gammaproteobacteria</taxon>
        <taxon>Pasteurellales</taxon>
        <taxon>Pasteurellaceae</taxon>
        <taxon>Basfia</taxon>
    </lineage>
</organism>
<protein>
    <recommendedName>
        <fullName evidence="1">Holliday junction branch migration complex subunit RuvB</fullName>
        <ecNumber evidence="1">3.6.4.-</ecNumber>
    </recommendedName>
</protein>
<proteinExistence type="inferred from homology"/>